<name>NDK_STAAW</name>
<gene>
    <name evidence="1" type="primary">ndk</name>
    <name type="ordered locus">MW1358</name>
</gene>
<protein>
    <recommendedName>
        <fullName evidence="1">Nucleoside diphosphate kinase</fullName>
        <shortName evidence="1">NDK</shortName>
        <shortName evidence="1">NDP kinase</shortName>
        <ecNumber evidence="1">2.7.4.6</ecNumber>
    </recommendedName>
    <alternativeName>
        <fullName evidence="1">Nucleoside-2-P kinase</fullName>
    </alternativeName>
</protein>
<dbReference type="EC" id="2.7.4.6" evidence="1"/>
<dbReference type="EMBL" id="BA000033">
    <property type="protein sequence ID" value="BAB95223.1"/>
    <property type="molecule type" value="Genomic_DNA"/>
</dbReference>
<dbReference type="RefSeq" id="WP_000442479.1">
    <property type="nucleotide sequence ID" value="NC_003923.1"/>
</dbReference>
<dbReference type="SMR" id="Q8NWN1"/>
<dbReference type="KEGG" id="sam:MW1358"/>
<dbReference type="HOGENOM" id="CLU_060216_6_3_9"/>
<dbReference type="GO" id="GO:0005737">
    <property type="term" value="C:cytoplasm"/>
    <property type="evidence" value="ECO:0007669"/>
    <property type="project" value="UniProtKB-SubCell"/>
</dbReference>
<dbReference type="GO" id="GO:0005524">
    <property type="term" value="F:ATP binding"/>
    <property type="evidence" value="ECO:0007669"/>
    <property type="project" value="UniProtKB-UniRule"/>
</dbReference>
<dbReference type="GO" id="GO:0046872">
    <property type="term" value="F:metal ion binding"/>
    <property type="evidence" value="ECO:0007669"/>
    <property type="project" value="UniProtKB-KW"/>
</dbReference>
<dbReference type="GO" id="GO:0004550">
    <property type="term" value="F:nucleoside diphosphate kinase activity"/>
    <property type="evidence" value="ECO:0007669"/>
    <property type="project" value="UniProtKB-UniRule"/>
</dbReference>
<dbReference type="GO" id="GO:0006241">
    <property type="term" value="P:CTP biosynthetic process"/>
    <property type="evidence" value="ECO:0007669"/>
    <property type="project" value="UniProtKB-UniRule"/>
</dbReference>
<dbReference type="GO" id="GO:0006183">
    <property type="term" value="P:GTP biosynthetic process"/>
    <property type="evidence" value="ECO:0007669"/>
    <property type="project" value="UniProtKB-UniRule"/>
</dbReference>
<dbReference type="GO" id="GO:0006228">
    <property type="term" value="P:UTP biosynthetic process"/>
    <property type="evidence" value="ECO:0007669"/>
    <property type="project" value="UniProtKB-UniRule"/>
</dbReference>
<dbReference type="CDD" id="cd04413">
    <property type="entry name" value="NDPk_I"/>
    <property type="match status" value="1"/>
</dbReference>
<dbReference type="FunFam" id="3.30.70.141:FF:000002">
    <property type="entry name" value="Nucleoside diphosphate kinase"/>
    <property type="match status" value="1"/>
</dbReference>
<dbReference type="Gene3D" id="3.30.70.141">
    <property type="entry name" value="Nucleoside diphosphate kinase-like domain"/>
    <property type="match status" value="1"/>
</dbReference>
<dbReference type="HAMAP" id="MF_00451">
    <property type="entry name" value="NDP_kinase"/>
    <property type="match status" value="1"/>
</dbReference>
<dbReference type="InterPro" id="IPR034907">
    <property type="entry name" value="NDK-like_dom"/>
</dbReference>
<dbReference type="InterPro" id="IPR036850">
    <property type="entry name" value="NDK-like_dom_sf"/>
</dbReference>
<dbReference type="InterPro" id="IPR001564">
    <property type="entry name" value="Nucleoside_diP_kinase"/>
</dbReference>
<dbReference type="InterPro" id="IPR023005">
    <property type="entry name" value="Nucleoside_diP_kinase_AS"/>
</dbReference>
<dbReference type="NCBIfam" id="NF001908">
    <property type="entry name" value="PRK00668.1"/>
    <property type="match status" value="1"/>
</dbReference>
<dbReference type="PANTHER" id="PTHR11349">
    <property type="entry name" value="NUCLEOSIDE DIPHOSPHATE KINASE"/>
    <property type="match status" value="1"/>
</dbReference>
<dbReference type="Pfam" id="PF00334">
    <property type="entry name" value="NDK"/>
    <property type="match status" value="1"/>
</dbReference>
<dbReference type="PRINTS" id="PR01243">
    <property type="entry name" value="NUCDPKINASE"/>
</dbReference>
<dbReference type="SMART" id="SM00562">
    <property type="entry name" value="NDK"/>
    <property type="match status" value="1"/>
</dbReference>
<dbReference type="SUPFAM" id="SSF54919">
    <property type="entry name" value="Nucleoside diphosphate kinase, NDK"/>
    <property type="match status" value="1"/>
</dbReference>
<dbReference type="PROSITE" id="PS00469">
    <property type="entry name" value="NDPK"/>
    <property type="match status" value="1"/>
</dbReference>
<dbReference type="PROSITE" id="PS51374">
    <property type="entry name" value="NDPK_LIKE"/>
    <property type="match status" value="1"/>
</dbReference>
<sequence length="149" mass="16561">MERTFLMIKPDAVQRNLIGEVISRIERKGLKLVGGKLMQVPMELAETHYGEHQGKPFYNDLISFITSAPVFAMVVEGEDAVNVSRHIIGSTNPSEASPGSIRGDLGLTVGRNIIHGSDSLDSAEREINLWFNENEITSYASPRDAWLYE</sequence>
<comment type="function">
    <text evidence="1">Major role in the synthesis of nucleoside triphosphates other than ATP. The ATP gamma phosphate is transferred to the NDP beta phosphate via a ping-pong mechanism, using a phosphorylated active-site intermediate.</text>
</comment>
<comment type="catalytic activity">
    <reaction evidence="1">
        <text>a 2'-deoxyribonucleoside 5'-diphosphate + ATP = a 2'-deoxyribonucleoside 5'-triphosphate + ADP</text>
        <dbReference type="Rhea" id="RHEA:44640"/>
        <dbReference type="ChEBI" id="CHEBI:30616"/>
        <dbReference type="ChEBI" id="CHEBI:61560"/>
        <dbReference type="ChEBI" id="CHEBI:73316"/>
        <dbReference type="ChEBI" id="CHEBI:456216"/>
        <dbReference type="EC" id="2.7.4.6"/>
    </reaction>
</comment>
<comment type="catalytic activity">
    <reaction evidence="1">
        <text>a ribonucleoside 5'-diphosphate + ATP = a ribonucleoside 5'-triphosphate + ADP</text>
        <dbReference type="Rhea" id="RHEA:18113"/>
        <dbReference type="ChEBI" id="CHEBI:30616"/>
        <dbReference type="ChEBI" id="CHEBI:57930"/>
        <dbReference type="ChEBI" id="CHEBI:61557"/>
        <dbReference type="ChEBI" id="CHEBI:456216"/>
        <dbReference type="EC" id="2.7.4.6"/>
    </reaction>
</comment>
<comment type="cofactor">
    <cofactor evidence="1">
        <name>Mg(2+)</name>
        <dbReference type="ChEBI" id="CHEBI:18420"/>
    </cofactor>
</comment>
<comment type="subunit">
    <text evidence="1">Homotetramer.</text>
</comment>
<comment type="subcellular location">
    <subcellularLocation>
        <location evidence="1">Cytoplasm</location>
    </subcellularLocation>
</comment>
<comment type="similarity">
    <text evidence="1">Belongs to the NDK family.</text>
</comment>
<proteinExistence type="inferred from homology"/>
<feature type="chain" id="PRO_0000137050" description="Nucleoside diphosphate kinase">
    <location>
        <begin position="1"/>
        <end position="149"/>
    </location>
</feature>
<feature type="active site" description="Pros-phosphohistidine intermediate" evidence="1">
    <location>
        <position position="115"/>
    </location>
</feature>
<feature type="binding site" evidence="1">
    <location>
        <position position="9"/>
    </location>
    <ligand>
        <name>ATP</name>
        <dbReference type="ChEBI" id="CHEBI:30616"/>
    </ligand>
</feature>
<feature type="binding site" evidence="1">
    <location>
        <position position="57"/>
    </location>
    <ligand>
        <name>ATP</name>
        <dbReference type="ChEBI" id="CHEBI:30616"/>
    </ligand>
</feature>
<feature type="binding site" evidence="1">
    <location>
        <position position="85"/>
    </location>
    <ligand>
        <name>ATP</name>
        <dbReference type="ChEBI" id="CHEBI:30616"/>
    </ligand>
</feature>
<feature type="binding site" evidence="1">
    <location>
        <position position="91"/>
    </location>
    <ligand>
        <name>ATP</name>
        <dbReference type="ChEBI" id="CHEBI:30616"/>
    </ligand>
</feature>
<feature type="binding site" evidence="1">
    <location>
        <position position="102"/>
    </location>
    <ligand>
        <name>ATP</name>
        <dbReference type="ChEBI" id="CHEBI:30616"/>
    </ligand>
</feature>
<feature type="binding site" evidence="1">
    <location>
        <position position="112"/>
    </location>
    <ligand>
        <name>ATP</name>
        <dbReference type="ChEBI" id="CHEBI:30616"/>
    </ligand>
</feature>
<organism>
    <name type="scientific">Staphylococcus aureus (strain MW2)</name>
    <dbReference type="NCBI Taxonomy" id="196620"/>
    <lineage>
        <taxon>Bacteria</taxon>
        <taxon>Bacillati</taxon>
        <taxon>Bacillota</taxon>
        <taxon>Bacilli</taxon>
        <taxon>Bacillales</taxon>
        <taxon>Staphylococcaceae</taxon>
        <taxon>Staphylococcus</taxon>
    </lineage>
</organism>
<reference key="1">
    <citation type="journal article" date="2002" name="Lancet">
        <title>Genome and virulence determinants of high virulence community-acquired MRSA.</title>
        <authorList>
            <person name="Baba T."/>
            <person name="Takeuchi F."/>
            <person name="Kuroda M."/>
            <person name="Yuzawa H."/>
            <person name="Aoki K."/>
            <person name="Oguchi A."/>
            <person name="Nagai Y."/>
            <person name="Iwama N."/>
            <person name="Asano K."/>
            <person name="Naimi T."/>
            <person name="Kuroda H."/>
            <person name="Cui L."/>
            <person name="Yamamoto K."/>
            <person name="Hiramatsu K."/>
        </authorList>
    </citation>
    <scope>NUCLEOTIDE SEQUENCE [LARGE SCALE GENOMIC DNA]</scope>
    <source>
        <strain>MW2</strain>
    </source>
</reference>
<evidence type="ECO:0000255" key="1">
    <source>
        <dbReference type="HAMAP-Rule" id="MF_00451"/>
    </source>
</evidence>
<keyword id="KW-0067">ATP-binding</keyword>
<keyword id="KW-0963">Cytoplasm</keyword>
<keyword id="KW-0418">Kinase</keyword>
<keyword id="KW-0460">Magnesium</keyword>
<keyword id="KW-0479">Metal-binding</keyword>
<keyword id="KW-0546">Nucleotide metabolism</keyword>
<keyword id="KW-0547">Nucleotide-binding</keyword>
<keyword id="KW-0597">Phosphoprotein</keyword>
<keyword id="KW-0808">Transferase</keyword>
<accession>Q8NWN1</accession>